<accession>Q9Q927</accession>
<evidence type="ECO:0000250" key="1">
    <source>
        <dbReference type="UniProtKB" id="P12927"/>
    </source>
</evidence>
<evidence type="ECO:0000255" key="2">
    <source>
        <dbReference type="PROSITE-ProRule" id="PRU00541"/>
    </source>
</evidence>
<evidence type="ECO:0000255" key="3">
    <source>
        <dbReference type="PROSITE-ProRule" id="PRU00542"/>
    </source>
</evidence>
<evidence type="ECO:0000305" key="4"/>
<proteinExistence type="evidence at transcript level"/>
<comment type="function">
    <text evidence="1">NTP-dependent helicase that catalyzes unidirectional unwinding of 3'tailed duplex RNAs and plays an important role during transcription of early mRNAs, presumably by preventing R-loop formation behind the elongating RNA polymerase. Might also play a role in the export of newly synthesized mRNA chains out of the core into the cytoplasm. Required for replication and propagation of viral particles.</text>
</comment>
<comment type="catalytic activity">
    <reaction evidence="1">
        <text>ATP + H2O = ADP + phosphate + H(+)</text>
        <dbReference type="Rhea" id="RHEA:13065"/>
        <dbReference type="ChEBI" id="CHEBI:15377"/>
        <dbReference type="ChEBI" id="CHEBI:15378"/>
        <dbReference type="ChEBI" id="CHEBI:30616"/>
        <dbReference type="ChEBI" id="CHEBI:43474"/>
        <dbReference type="ChEBI" id="CHEBI:456216"/>
        <dbReference type="EC" id="3.6.4.13"/>
    </reaction>
</comment>
<comment type="subunit">
    <text evidence="1">Monomer.</text>
</comment>
<comment type="subcellular location">
    <subcellularLocation>
        <location evidence="1">Virion</location>
    </subcellularLocation>
    <text evidence="1">Localizes to the virion core.</text>
</comment>
<comment type="induction">
    <text>Expressed both early and late in the viral replicative cycle.</text>
</comment>
<comment type="similarity">
    <text evidence="4">Belongs to the DEAD box helicase family. DEAH subfamily.</text>
</comment>
<gene>
    <name type="primary">OPG084</name>
    <name type="synonym">NPH2</name>
    <name type="ordered locus">s044R</name>
</gene>
<organismHost>
    <name type="scientific">Oryctolagus cuniculus</name>
    <name type="common">Rabbit</name>
    <dbReference type="NCBI Taxonomy" id="9986"/>
</organismHost>
<dbReference type="EC" id="3.6.4.13"/>
<dbReference type="EMBL" id="AF170722">
    <property type="protein sequence ID" value="AAF17926.1"/>
    <property type="molecule type" value="Genomic_DNA"/>
</dbReference>
<dbReference type="RefSeq" id="NP_051933.1">
    <property type="nucleotide sequence ID" value="NC_001266.1"/>
</dbReference>
<dbReference type="SMR" id="Q9Q927"/>
<dbReference type="KEGG" id="vg:1486887"/>
<dbReference type="Proteomes" id="UP000000868">
    <property type="component" value="Segment"/>
</dbReference>
<dbReference type="GO" id="GO:0044423">
    <property type="term" value="C:virion component"/>
    <property type="evidence" value="ECO:0007669"/>
    <property type="project" value="UniProtKB-KW"/>
</dbReference>
<dbReference type="GO" id="GO:0005524">
    <property type="term" value="F:ATP binding"/>
    <property type="evidence" value="ECO:0007669"/>
    <property type="project" value="UniProtKB-KW"/>
</dbReference>
<dbReference type="GO" id="GO:0016887">
    <property type="term" value="F:ATP hydrolysis activity"/>
    <property type="evidence" value="ECO:0007669"/>
    <property type="project" value="RHEA"/>
</dbReference>
<dbReference type="GO" id="GO:0003723">
    <property type="term" value="F:RNA binding"/>
    <property type="evidence" value="ECO:0007669"/>
    <property type="project" value="TreeGrafter"/>
</dbReference>
<dbReference type="GO" id="GO:0003724">
    <property type="term" value="F:RNA helicase activity"/>
    <property type="evidence" value="ECO:0007669"/>
    <property type="project" value="UniProtKB-EC"/>
</dbReference>
<dbReference type="Gene3D" id="3.40.50.300">
    <property type="entry name" value="P-loop containing nucleotide triphosphate hydrolases"/>
    <property type="match status" value="2"/>
</dbReference>
<dbReference type="InterPro" id="IPR011545">
    <property type="entry name" value="DEAD/DEAH_box_helicase_dom"/>
</dbReference>
<dbReference type="InterPro" id="IPR002464">
    <property type="entry name" value="DNA/RNA_helicase_DEAH_CS"/>
</dbReference>
<dbReference type="InterPro" id="IPR014001">
    <property type="entry name" value="Helicase_ATP-bd"/>
</dbReference>
<dbReference type="InterPro" id="IPR001650">
    <property type="entry name" value="Helicase_C-like"/>
</dbReference>
<dbReference type="InterPro" id="IPR021892">
    <property type="entry name" value="NPH-II"/>
</dbReference>
<dbReference type="InterPro" id="IPR027417">
    <property type="entry name" value="P-loop_NTPase"/>
</dbReference>
<dbReference type="PANTHER" id="PTHR18934">
    <property type="entry name" value="ATP-DEPENDENT RNA HELICASE"/>
    <property type="match status" value="1"/>
</dbReference>
<dbReference type="PANTHER" id="PTHR18934:SF221">
    <property type="entry name" value="ATP-DEPENDENT RNA HELICASE DHX34-RELATED"/>
    <property type="match status" value="1"/>
</dbReference>
<dbReference type="Pfam" id="PF00270">
    <property type="entry name" value="DEAD"/>
    <property type="match status" value="1"/>
</dbReference>
<dbReference type="Pfam" id="PF00271">
    <property type="entry name" value="Helicase_C"/>
    <property type="match status" value="1"/>
</dbReference>
<dbReference type="Pfam" id="PF12011">
    <property type="entry name" value="NPH-II"/>
    <property type="match status" value="1"/>
</dbReference>
<dbReference type="SMART" id="SM00487">
    <property type="entry name" value="DEXDc"/>
    <property type="match status" value="1"/>
</dbReference>
<dbReference type="SMART" id="SM00490">
    <property type="entry name" value="HELICc"/>
    <property type="match status" value="1"/>
</dbReference>
<dbReference type="SUPFAM" id="SSF52540">
    <property type="entry name" value="P-loop containing nucleoside triphosphate hydrolases"/>
    <property type="match status" value="1"/>
</dbReference>
<dbReference type="PROSITE" id="PS00690">
    <property type="entry name" value="DEAH_ATP_HELICASE"/>
    <property type="match status" value="1"/>
</dbReference>
<dbReference type="PROSITE" id="PS51192">
    <property type="entry name" value="HELICASE_ATP_BIND_1"/>
    <property type="match status" value="1"/>
</dbReference>
<dbReference type="PROSITE" id="PS51194">
    <property type="entry name" value="HELICASE_CTER"/>
    <property type="match status" value="1"/>
</dbReference>
<organism>
    <name type="scientific">Rabbit fibroma virus (strain Kasza)</name>
    <name type="common">RFV</name>
    <name type="synonym">Shope fibroma virus (strain Kasza)</name>
    <dbReference type="NCBI Taxonomy" id="10272"/>
    <lineage>
        <taxon>Viruses</taxon>
        <taxon>Varidnaviria</taxon>
        <taxon>Bamfordvirae</taxon>
        <taxon>Nucleocytoviricota</taxon>
        <taxon>Pokkesviricetes</taxon>
        <taxon>Chitovirales</taxon>
        <taxon>Poxviridae</taxon>
        <taxon>Chordopoxvirinae</taxon>
        <taxon>Leporipoxvirus</taxon>
        <taxon>Rabbit fibroma virus</taxon>
    </lineage>
</organism>
<keyword id="KW-0067">ATP-binding</keyword>
<keyword id="KW-0347">Helicase</keyword>
<keyword id="KW-0378">Hydrolase</keyword>
<keyword id="KW-0547">Nucleotide-binding</keyword>
<keyword id="KW-1185">Reference proteome</keyword>
<keyword id="KW-0804">Transcription</keyword>
<keyword id="KW-0946">Virion</keyword>
<feature type="chain" id="PRO_0000055191" description="RNA helicase NPH-II">
    <location>
        <begin position="1"/>
        <end position="678"/>
    </location>
</feature>
<feature type="domain" description="Helicase ATP-binding" evidence="2">
    <location>
        <begin position="175"/>
        <end position="351"/>
    </location>
</feature>
<feature type="domain" description="Helicase C-terminal" evidence="3">
    <location>
        <begin position="371"/>
        <end position="546"/>
    </location>
</feature>
<feature type="short sequence motif" description="DEXH box">
    <location>
        <begin position="300"/>
        <end position="303"/>
    </location>
</feature>
<feature type="binding site" evidence="2">
    <location>
        <begin position="188"/>
        <end position="195"/>
    </location>
    <ligand>
        <name>ATP</name>
        <dbReference type="ChEBI" id="CHEBI:30616"/>
    </ligand>
</feature>
<protein>
    <recommendedName>
        <fullName>RNA helicase NPH-II</fullName>
        <ecNumber>3.6.4.13</ecNumber>
    </recommendedName>
    <alternativeName>
        <fullName>Nucleoside triphosphatase II</fullName>
        <shortName>NTPase II</shortName>
    </alternativeName>
    <alternativeName>
        <fullName>Nucleoside triphosphate phosphohydrolase II</fullName>
        <shortName>NPH II</shortName>
    </alternativeName>
</protein>
<reference key="1">
    <citation type="journal article" date="1999" name="Virology">
        <title>The complete genome sequence of shope (Rabbit) fibroma virus.</title>
        <authorList>
            <person name="Willer D.O."/>
            <person name="McFadden G."/>
            <person name="Evans D.H."/>
        </authorList>
    </citation>
    <scope>NUCLEOTIDE SEQUENCE [LARGE SCALE GENOMIC DNA]</scope>
</reference>
<name>NPH2_RFVKA</name>
<sequence length="678" mass="78243">MENHLPNIFYFPNCVTTFPYRYTQKELDDMKPDERERFKYATFPIIKHRWSHAYVVKDNHVFKLNVETSKRLRRATPPTLSVPVSMNTMLREYITQDGTKISFECYSYLTCKKATSLHDLDDNAIRGLVEGGNRLQLFTNSVGSVKDTVGIFGNPNPFMKVPLKSLHPSMQCKIFESWIHHVPVVLTGDTGVGKTSQVPKLLLWFNYLFGGFVNLSTITFDVQEKPIVLSLPRVALVKLHSETLLTSLGFNEIHKSPVSLKFGNMQEQFVNTRFRRYGIVFSTHKITLNTLFNYSTVILDEVHEHDQTGDIIIAVCRKYIRKLDSLFLMTATLEDDRQRIEEFFTESVFVHIPGGTLFSISEAYVKNSNDSLNKFMYIEEEKRNLVNAIKTYTPPKQSSGIVFVSTVSQCDVYKQYLSERLPYKFYIIHGKIQNINDLLSDIYDNEGVSIIISTPYLESSVTVQNATHVYDTGRVYIPSPYGGREVFISKSMRDQRKGRVGRVKPGMYIYFYDVSELRPIKRIDFEFLHNYVLYSKVFDLQLPEDLFVKPTNMTRLRDVIEYIRSFNISDGVWTRLLSSYYIHILEYAKVYARGGQSAAALDSFERTGNLTDDALDAIKSLNMRAKIISHRKASTHTYALMCRLLFGVYAGKTFIAYHKRPLTGYITMITEHSFIPEY</sequence>